<reference key="1">
    <citation type="journal article" date="1990" name="Plant Mol. Biol.">
        <title>Complete sequence of a cDNA of alpha subunit of soybean beta-conglycinin.</title>
        <authorList>
            <person name="Sebastiani F.L."/>
            <person name="Farrel L.B."/>
            <person name="Schuler M.A."/>
            <person name="Beachy R.N."/>
        </authorList>
    </citation>
    <scope>NUCLEOTIDE SEQUENCE [MRNA]</scope>
    <source>
        <tissue>Cotyledon</tissue>
    </source>
</reference>
<reference key="2">
    <citation type="journal article" date="2001" name="Genes Genet. Syst.">
        <title>Structure and characterization of the gene encoding alpha subunit of soybean beta-conglycinin.</title>
        <authorList>
            <person name="Yoshino M."/>
            <person name="Kanazawa A."/>
            <person name="Tsutsumi K.I."/>
            <person name="Nakamura I."/>
            <person name="Shimamoto Y."/>
        </authorList>
    </citation>
    <scope>NUCLEOTIDE SEQUENCE [MRNA]</scope>
</reference>
<reference key="3">
    <citation type="journal article" date="2002" name="Breed. Sci.">
        <title>Structural variation around the gene encoding the alpha subunit of soybean beta-conglycinin and correlation with the expression of the alpha subunit.</title>
        <authorList>
            <person name="Yoshino M."/>
            <person name="Kanazawa A."/>
            <person name="Tsutsumi K."/>
            <person name="Nakamura I."/>
            <person name="Takahashi K."/>
            <person name="Shimamoto Y."/>
        </authorList>
    </citation>
    <scope>NUCLEOTIDE SEQUENCE [MRNA]</scope>
</reference>
<reference key="4">
    <citation type="journal article" date="2006" name="Genes Genet. Syst.">
        <title>The regulatory function of the upstream sequence of the beta-conglycinin alpha subunit gene in seed-specific transcription is associated with the presence of the RY sequence.</title>
        <authorList>
            <person name="Yoshino M."/>
            <person name="Nagamatsu A."/>
            <person name="Tsutsumi K."/>
            <person name="Kanazawa A."/>
        </authorList>
    </citation>
    <scope>NUCLEOTIDE SEQUENCE [MRNA]</scope>
</reference>
<reference key="5">
    <citation type="journal article" date="2010" name="Nature">
        <title>Genome sequence of the palaeopolyploid soybean.</title>
        <authorList>
            <person name="Schmutz J."/>
            <person name="Cannon S.B."/>
            <person name="Schlueter J."/>
            <person name="Ma J."/>
            <person name="Mitros T."/>
            <person name="Nelson W."/>
            <person name="Hyten D.L."/>
            <person name="Song Q."/>
            <person name="Thelen J.J."/>
            <person name="Cheng J."/>
            <person name="Xu D."/>
            <person name="Hellsten U."/>
            <person name="May G.D."/>
            <person name="Yu Y."/>
            <person name="Sakurai T."/>
            <person name="Umezawa T."/>
            <person name="Bhattacharyya M.K."/>
            <person name="Sandhu D."/>
            <person name="Valliyodan B."/>
            <person name="Lindquist E."/>
            <person name="Peto M."/>
            <person name="Grant D."/>
            <person name="Shu S."/>
            <person name="Goodstein D."/>
            <person name="Barry K."/>
            <person name="Futrell-Griggs M."/>
            <person name="Abernathy B."/>
            <person name="Du J."/>
            <person name="Tian Z."/>
            <person name="Zhu L."/>
            <person name="Gill N."/>
            <person name="Joshi T."/>
            <person name="Libault M."/>
            <person name="Sethuraman A."/>
            <person name="Zhang X.-C."/>
            <person name="Shinozaki K."/>
            <person name="Nguyen H.T."/>
            <person name="Wing R.A."/>
            <person name="Cregan P."/>
            <person name="Specht J."/>
            <person name="Grimwood J."/>
            <person name="Rokhsar D."/>
            <person name="Stacey G."/>
            <person name="Shoemaker R.C."/>
            <person name="Jackson S.A."/>
        </authorList>
    </citation>
    <scope>NUCLEOTIDE SEQUENCE [LARGE SCALE GENOMIC DNA]</scope>
    <source>
        <strain>cv. Williams 82</strain>
    </source>
</reference>
<reference key="6">
    <citation type="journal article" date="1987" name="Phytochemistry">
        <title>Structural homology among the major 7s globulin subunits of soybean seed storage proteins.</title>
        <authorList>
            <person name="Hirano H."/>
            <person name="Kagawa H."/>
            <person name="Kamata Y."/>
            <person name="Yamauchi F."/>
        </authorList>
    </citation>
    <scope>PROTEIN SEQUENCE OF 63-75</scope>
    <source>
        <strain>cv. Raiden</strain>
    </source>
</reference>
<reference key="7">
    <citation type="journal article" date="2004" name="Plant J.">
        <title>The composition of newly synthesized proteins in the endoplasmic reticulum determines the transport pathways of soybean seed storage proteins.</title>
        <authorList>
            <person name="Mori T."/>
            <person name="Maruyama N."/>
            <person name="Nishizawa K."/>
            <person name="Higasa T."/>
            <person name="Yagasaki K."/>
            <person name="Ishimoto M."/>
            <person name="Utsumi S."/>
        </authorList>
    </citation>
    <scope>SUBUNIT</scope>
    <scope>SUBCELLULAR LOCATION</scope>
</reference>
<reference key="8">
    <citation type="journal article" date="2009" name="J. Allergy Clin. Immunol.">
        <title>Soybean (Glycine max) allergy in Europe: Gly m 5 (beta-conglycinin) and Gly m 6 (glycinin) are potential diagnostic markers for severe allergic reactions to soy.</title>
        <authorList>
            <person name="Holzhauser T."/>
            <person name="Wackermann O."/>
            <person name="Ballmer-Weber B.K."/>
            <person name="Bindslev-Jensen C."/>
            <person name="Scibilia J."/>
            <person name="Perono-Garoffo L."/>
            <person name="Utsumi S."/>
            <person name="Poulsen L.K."/>
            <person name="Vieths S."/>
        </authorList>
    </citation>
    <scope>ALLERGEN</scope>
</reference>
<reference key="9">
    <citation type="journal article" date="2012" name="Plant Physiol.">
        <title>Accumulation of beta-conglycinin in soybean cotyledon through the formation of disulfide bonds between alpha'- and alpha-subunits.</title>
        <authorList>
            <person name="Wadahama H."/>
            <person name="Iwasaki K."/>
            <person name="Matsusaki M."/>
            <person name="Nishizawa K."/>
            <person name="Ishimoto M."/>
            <person name="Arisaka F."/>
            <person name="Takagi K."/>
            <person name="Urade R."/>
        </authorList>
    </citation>
    <scope>DISULFIDE BOND</scope>
</reference>
<protein>
    <recommendedName>
        <fullName evidence="7">Beta-conglycinin alpha subunit 2</fullName>
        <shortName evidence="7">CG-alpha-2</shortName>
    </recommendedName>
    <alternativeName>
        <fullName evidence="6">Beta-conglycinin alpha-related subunit</fullName>
    </alternativeName>
    <allergenName evidence="7">Gly m 5</allergenName>
</protein>
<proteinExistence type="evidence at protein level"/>
<sequence>MMRARFPLLLLGLVFLASVSVSFGIAYWEKENPKHNKCLQSCNSERDSYRNQACHARCNLLKVEKEECEEGEIPRPRPRPQHPEREPQQPGEKEEDEDEQPRPIPFPRPQPRQEEEHEQREEQEWPRKEEKRGEKGSEEEDEDEDEEQDERQFPFPRPPHQKEERKQEEDEDEEQQRESEESEDSELRRHKNKNPFLFGSNRFETLFKNQYGRIRVLQRFNQRSPQLQNLRDYRILEFNSKPNTLLLPNHADADYLIVILNGTAILSLVNNDDRDSYRLQSGDALRVPSGTTYYVVNPDNNENLRLITLAIPVNKPGRFESFFLSSTEAQQSYLQGFSRNILEASYDTKFEEINKVLFSREEGQQQGEQRLQESVIVEISKEQIRALSKRAKSSSRKTISSEDKPFNLRSRDPIYSNKLGKFFEITPEKNPQLRDLDIFLSIVDMNEGALLLPHFNSKAIVILVINEGDANIELVGLKEQQQEQQQEEQPLEVRKYRAELSEQDIFVIPAGYPVVVNATSNLNFFAIGINAENNQRNFLAGSQDNVISQIPSQVQELAFPGSAQAVEKLLKNQRESYFVDAQPKKKEEGNKGRKGPLSSILRAFY</sequence>
<comment type="function">
    <text evidence="7">Seed storage protein. Accumulates during seed development and is hydrolyzed after germination to provide a carbon and nitrogen source for the developing seedling.</text>
</comment>
<comment type="subunit">
    <text evidence="8">The alpha-, alpha'-, and beta-subunits associate in various combinations to form trimeric proteins.</text>
</comment>
<comment type="subcellular location">
    <subcellularLocation>
        <location evidence="7">Vacuole</location>
        <location evidence="7">Aleurone grain</location>
    </subcellularLocation>
    <subcellularLocation>
        <location evidence="4">Endoplasmic reticulum</location>
    </subcellularLocation>
    <subcellularLocation>
        <location>Protein storage vacuole</location>
    </subcellularLocation>
    <text evidence="4">Localizes in protein storage vacuoles in cotyledons of developing and mature beans (PubMed:15447650). Synthesized and assembled into trimers in the endoplasmic reticulum, and transported to the protein storage vacuoles by the dense vesicles (PubMed:15447650).</text>
</comment>
<comment type="allergen">
    <text evidence="5">Causes an allergic reaction in human (PubMed:18996574). Binds to IgE of patients with severe allergic reactions (anaphylaxis) to soybean (PubMed:18996574).</text>
</comment>
<comment type="similarity">
    <text evidence="7">Belongs to the 7S seed storage protein family.</text>
</comment>
<gene>
    <name evidence="6" type="primary">CG-2</name>
    <name evidence="11" type="ORF">GLYMA_20G148400</name>
</gene>
<feature type="signal peptide" evidence="1">
    <location>
        <begin position="1"/>
        <end position="22"/>
    </location>
</feature>
<feature type="propeptide" id="PRO_0000446073" evidence="10">
    <location>
        <begin position="23"/>
        <end position="62"/>
    </location>
</feature>
<feature type="chain" id="PRO_5014589218" description="Beta-conglycinin alpha subunit 2">
    <location>
        <begin position="63"/>
        <end position="605"/>
    </location>
</feature>
<feature type="domain" description="Cupin type-1 1" evidence="1">
    <location>
        <begin position="196"/>
        <end position="354"/>
    </location>
</feature>
<feature type="domain" description="Cupin type-1 2" evidence="1">
    <location>
        <begin position="406"/>
        <end position="567"/>
    </location>
</feature>
<feature type="region of interest" description="Disordered" evidence="3">
    <location>
        <begin position="65"/>
        <end position="195"/>
    </location>
</feature>
<feature type="compositionally biased region" description="Basic and acidic residues" evidence="3">
    <location>
        <begin position="111"/>
        <end position="136"/>
    </location>
</feature>
<feature type="compositionally biased region" description="Acidic residues" evidence="3">
    <location>
        <begin position="137"/>
        <end position="149"/>
    </location>
</feature>
<feature type="compositionally biased region" description="Acidic residues" evidence="3">
    <location>
        <begin position="169"/>
        <end position="184"/>
    </location>
</feature>
<feature type="glycosylation site" description="N-linked (GlcNAc...) asparagine" evidence="2">
    <location>
        <position position="261"/>
    </location>
</feature>
<feature type="glycosylation site" description="N-linked (GlcNAc...) asparagine" evidence="2">
    <location>
        <position position="517"/>
    </location>
</feature>
<feature type="disulfide bond" description="Interchain (with C-69 in alpha' subunit)" evidence="9">
    <location>
        <position position="68"/>
    </location>
</feature>
<feature type="sequence conflict" description="In Ref. 1; CAA35691." evidence="7" ref="1">
    <original>KQ</original>
    <variation>NE</variation>
    <location>
        <begin position="166"/>
        <end position="167"/>
    </location>
</feature>
<dbReference type="EMBL" id="X17698">
    <property type="protein sequence ID" value="CAA35691.1"/>
    <property type="molecule type" value="mRNA"/>
</dbReference>
<dbReference type="EMBL" id="AB051865">
    <property type="protein sequence ID" value="BAB56161.1"/>
    <property type="molecule type" value="Genomic_DNA"/>
</dbReference>
<dbReference type="EMBL" id="AB237643">
    <property type="protein sequence ID" value="BAE46788.1"/>
    <property type="molecule type" value="Genomic_DNA"/>
</dbReference>
<dbReference type="EMBL" id="CM000853">
    <property type="protein sequence ID" value="KRG91332.1"/>
    <property type="molecule type" value="Genomic_DNA"/>
</dbReference>
<dbReference type="EMBL" id="ACUP02012676">
    <property type="status" value="NOT_ANNOTATED_CDS"/>
    <property type="molecule type" value="Genomic_DNA"/>
</dbReference>
<dbReference type="PIR" id="S20007">
    <property type="entry name" value="S20007"/>
</dbReference>
<dbReference type="RefSeq" id="NP_001236856.1">
    <property type="nucleotide sequence ID" value="NM_001249927.1"/>
</dbReference>
<dbReference type="SMR" id="P0DO15"/>
<dbReference type="FunCoup" id="P0DO15">
    <property type="interactions" value="384"/>
</dbReference>
<dbReference type="STRING" id="3847.P0DO15"/>
<dbReference type="GlyCosmos" id="P0DO15">
    <property type="glycosylation" value="2 sites, No reported glycans"/>
</dbReference>
<dbReference type="EnsemblPlants" id="KRG91330">
    <property type="protein sequence ID" value="KRG91330"/>
    <property type="gene ID" value="GLYMA_20G148300"/>
</dbReference>
<dbReference type="EnsemblPlants" id="KRG91332">
    <property type="protein sequence ID" value="KRG91332"/>
    <property type="gene ID" value="GLYMA_20G148400"/>
</dbReference>
<dbReference type="Gramene" id="KRG91330">
    <property type="protein sequence ID" value="KRG91330"/>
    <property type="gene ID" value="GLYMA_20G148300"/>
</dbReference>
<dbReference type="Gramene" id="KRG91332">
    <property type="protein sequence ID" value="KRG91332"/>
    <property type="gene ID" value="GLYMA_20G148400"/>
</dbReference>
<dbReference type="KEGG" id="gmx:547464"/>
<dbReference type="InParanoid" id="P0DO15"/>
<dbReference type="OMA" id="ENPWRRE"/>
<dbReference type="OrthoDB" id="1425232at2759"/>
<dbReference type="Proteomes" id="UP000008827">
    <property type="component" value="Chromosome 20"/>
</dbReference>
<dbReference type="GO" id="GO:0033095">
    <property type="term" value="C:aleurone grain"/>
    <property type="evidence" value="ECO:0007669"/>
    <property type="project" value="UniProtKB-SubCell"/>
</dbReference>
<dbReference type="GO" id="GO:0005783">
    <property type="term" value="C:endoplasmic reticulum"/>
    <property type="evidence" value="ECO:0000314"/>
    <property type="project" value="UniProtKB"/>
</dbReference>
<dbReference type="GO" id="GO:0000326">
    <property type="term" value="C:protein storage vacuole"/>
    <property type="evidence" value="ECO:0000314"/>
    <property type="project" value="UniProtKB"/>
</dbReference>
<dbReference type="CDD" id="cd02245">
    <property type="entry name" value="cupin_7S_vicilin-like_C"/>
    <property type="match status" value="1"/>
</dbReference>
<dbReference type="CDD" id="cd02244">
    <property type="entry name" value="cupin_7S_vicilin-like_N"/>
    <property type="match status" value="1"/>
</dbReference>
<dbReference type="FunFam" id="2.60.120.10:FF:000162">
    <property type="entry name" value="Beta-conglycinin beta subunit 1"/>
    <property type="match status" value="1"/>
</dbReference>
<dbReference type="FunFam" id="2.60.120.10:FF:000181">
    <property type="entry name" value="Beta-conglycinin beta subunit 1"/>
    <property type="match status" value="1"/>
</dbReference>
<dbReference type="Gene3D" id="2.60.120.10">
    <property type="entry name" value="Jelly Rolls"/>
    <property type="match status" value="2"/>
</dbReference>
<dbReference type="InterPro" id="IPR006045">
    <property type="entry name" value="Cupin_1"/>
</dbReference>
<dbReference type="InterPro" id="IPR014710">
    <property type="entry name" value="RmlC-like_jellyroll"/>
</dbReference>
<dbReference type="InterPro" id="IPR011051">
    <property type="entry name" value="RmlC_Cupin_sf"/>
</dbReference>
<dbReference type="InterPro" id="IPR050253">
    <property type="entry name" value="Seed_Storage-Functional"/>
</dbReference>
<dbReference type="PANTHER" id="PTHR31189">
    <property type="entry name" value="OS03G0336100 PROTEIN-RELATED"/>
    <property type="match status" value="1"/>
</dbReference>
<dbReference type="PANTHER" id="PTHR31189:SF41">
    <property type="entry name" value="VICILIN C72"/>
    <property type="match status" value="1"/>
</dbReference>
<dbReference type="Pfam" id="PF00190">
    <property type="entry name" value="Cupin_1"/>
    <property type="match status" value="1"/>
</dbReference>
<dbReference type="SMART" id="SM00835">
    <property type="entry name" value="Cupin_1"/>
    <property type="match status" value="2"/>
</dbReference>
<dbReference type="SUPFAM" id="SSF51182">
    <property type="entry name" value="RmlC-like cupins"/>
    <property type="match status" value="2"/>
</dbReference>
<accession>P0DO15</accession>
<accession>P13916</accession>
<accession>Q94LX2</accession>
<keyword id="KW-0020">Allergen</keyword>
<keyword id="KW-0903">Direct protein sequencing</keyword>
<keyword id="KW-1015">Disulfide bond</keyword>
<keyword id="KW-0256">Endoplasmic reticulum</keyword>
<keyword id="KW-0325">Glycoprotein</keyword>
<keyword id="KW-1185">Reference proteome</keyword>
<keyword id="KW-0732">Signal</keyword>
<keyword id="KW-0926">Vacuole</keyword>
<evidence type="ECO:0000255" key="1"/>
<evidence type="ECO:0000255" key="2">
    <source>
        <dbReference type="PROSITE-ProRule" id="PRU00498"/>
    </source>
</evidence>
<evidence type="ECO:0000256" key="3">
    <source>
        <dbReference type="SAM" id="MobiDB-lite"/>
    </source>
</evidence>
<evidence type="ECO:0000269" key="4">
    <source>
    </source>
</evidence>
<evidence type="ECO:0000269" key="5">
    <source>
    </source>
</evidence>
<evidence type="ECO:0000303" key="6">
    <source ref="3"/>
</evidence>
<evidence type="ECO:0000305" key="7"/>
<evidence type="ECO:0000305" key="8">
    <source>
    </source>
</evidence>
<evidence type="ECO:0000305" key="9">
    <source>
    </source>
</evidence>
<evidence type="ECO:0000305" key="10">
    <source ref="6"/>
</evidence>
<evidence type="ECO:0000312" key="11">
    <source>
        <dbReference type="EMBL" id="KRG91332.1"/>
    </source>
</evidence>
<organism>
    <name type="scientific">Glycine max</name>
    <name type="common">Soybean</name>
    <name type="synonym">Glycine hispida</name>
    <dbReference type="NCBI Taxonomy" id="3847"/>
    <lineage>
        <taxon>Eukaryota</taxon>
        <taxon>Viridiplantae</taxon>
        <taxon>Streptophyta</taxon>
        <taxon>Embryophyta</taxon>
        <taxon>Tracheophyta</taxon>
        <taxon>Spermatophyta</taxon>
        <taxon>Magnoliopsida</taxon>
        <taxon>eudicotyledons</taxon>
        <taxon>Gunneridae</taxon>
        <taxon>Pentapetalae</taxon>
        <taxon>rosids</taxon>
        <taxon>fabids</taxon>
        <taxon>Fabales</taxon>
        <taxon>Fabaceae</taxon>
        <taxon>Papilionoideae</taxon>
        <taxon>50 kb inversion clade</taxon>
        <taxon>NPAAA clade</taxon>
        <taxon>indigoferoid/millettioid clade</taxon>
        <taxon>Phaseoleae</taxon>
        <taxon>Glycine</taxon>
        <taxon>Glycine subgen. Soja</taxon>
    </lineage>
</organism>
<name>GLCA2_SOYBN</name>